<sequence length="976" mass="107214">MTSIYTSDLKNHRRAPPPPNGAAGSGSGSSSGSGSGSGSGSGSGSLTNIVTSSNSLGVTANQTKPIQLNINSSKRQSGWVHVKDDGIFTSFRWNKRFMVINDKTLNFYKQEPYSSDGNSNSNTPDLSFPLYLINNINLKPNSGYSKTSQSFEIVPKNNNKSILISVKTNNDYLDWLDAFTTKCPLVQIGENNSGVSSSHPHLQIQHLTNGSLNGNSSSSPTSGLSSSSVLTGGNSGVSGPINFTHKVHVGFDPASGNFTGLPDTWKSLLQHSKITNEDWKKDPVAVIKVLEFYSDINGGNSAAGTPIGSPMINSKTNNNNNDPNNYSSAKNNVQEANLQEWVKPPAKSTVSQFKPSRAAPKPPTPYHLTQLNGSSHQHTSSSGSLPSSGNNNNNNNSTNNNNTKNVSPLNNLMNKSELIPARRAPPPPTSGTSSDTYSNKNHQDRSGYEQQRQQRTDSSQQQQQQQKQHQYQQKSQQQQQQPLSSHQGGTSHIPKQVPPTLPSSGPPTQAASGKSMPSKIHPDLKIQQGTNNYIKSSGTDANQVDGDAKQFIKPFNLQSKKSQQQLASKQPSPPSSQQQQQKPMTSHGLMGTSHSVTKPLNPVNDPIKPLNLKSSKSKEALNETSGVSKTPSPTDKSNKPTAPASGPAVTKTAKQLKKERERLNDLQIIAKLKTVVNNQDPKPLFRIVEKAGQGASGNVYLAEMIKDNNRKIAIKQMDLDAQPRKELIINEILVMKDSQHKNIVNFLDSYLIGDNELWVIMEYMQGGSLTEIIENNDFKLNEKQIATICFETLKGLQHLHKKHIIHRDIKSDNVLLDAYGNVKITDFGFCAKLTDQRNKRATMVGTPYWMAPEVVKQKEYDEKVDVWSLGIMTIEMIEGEPPYLNEEPLKALYLIATNGTPKLKKPELLSNSIKKFLSICLCVDVRYRASTDELLEHSFIQHKSGKIEELAPLLEWKKQQQKHQQHKQETSDTGFA</sequence>
<dbReference type="EC" id="2.7.11.1"/>
<dbReference type="EMBL" id="CP017623">
    <property type="protein sequence ID" value="AOW26651.1"/>
    <property type="molecule type" value="Genomic_DNA"/>
</dbReference>
<dbReference type="RefSeq" id="XP_723573.1">
    <property type="nucleotide sequence ID" value="XM_718480.1"/>
</dbReference>
<dbReference type="SMR" id="Q5APR8"/>
<dbReference type="BioGRID" id="1217972">
    <property type="interactions" value="1"/>
</dbReference>
<dbReference type="FunCoup" id="Q5APR8">
    <property type="interactions" value="342"/>
</dbReference>
<dbReference type="STRING" id="237561.Q5APR8"/>
<dbReference type="EnsemblFungi" id="C1_10210C_A-T">
    <property type="protein sequence ID" value="C1_10210C_A-T-p1"/>
    <property type="gene ID" value="C1_10210C_A"/>
</dbReference>
<dbReference type="GeneID" id="3634878"/>
<dbReference type="KEGG" id="cal:CAALFM_C110210CA"/>
<dbReference type="CGD" id="CAL0000192143">
    <property type="gene designation" value="CLA4"/>
</dbReference>
<dbReference type="VEuPathDB" id="FungiDB:C1_10210C_A"/>
<dbReference type="eggNOG" id="KOG0578">
    <property type="taxonomic scope" value="Eukaryota"/>
</dbReference>
<dbReference type="HOGENOM" id="CLU_000288_26_2_1"/>
<dbReference type="InParanoid" id="Q5APR8"/>
<dbReference type="OrthoDB" id="248923at2759"/>
<dbReference type="PHI-base" id="PHI:6803"/>
<dbReference type="PRO" id="PR:Q5APR8"/>
<dbReference type="Proteomes" id="UP000000559">
    <property type="component" value="Chromosome 1"/>
</dbReference>
<dbReference type="GO" id="GO:0005737">
    <property type="term" value="C:cytoplasm"/>
    <property type="evidence" value="ECO:0000318"/>
    <property type="project" value="GO_Central"/>
</dbReference>
<dbReference type="GO" id="GO:0005524">
    <property type="term" value="F:ATP binding"/>
    <property type="evidence" value="ECO:0007669"/>
    <property type="project" value="UniProtKB-KW"/>
</dbReference>
<dbReference type="GO" id="GO:0106310">
    <property type="term" value="F:protein serine kinase activity"/>
    <property type="evidence" value="ECO:0007669"/>
    <property type="project" value="RHEA"/>
</dbReference>
<dbReference type="GO" id="GO:0004674">
    <property type="term" value="F:protein serine/threonine kinase activity"/>
    <property type="evidence" value="ECO:0000316"/>
    <property type="project" value="CGD"/>
</dbReference>
<dbReference type="GO" id="GO:0009267">
    <property type="term" value="P:cellular response to starvation"/>
    <property type="evidence" value="ECO:0000315"/>
    <property type="project" value="CGD"/>
</dbReference>
<dbReference type="GO" id="GO:0001410">
    <property type="term" value="P:chlamydospore formation"/>
    <property type="evidence" value="ECO:0000315"/>
    <property type="project" value="CGD"/>
</dbReference>
<dbReference type="GO" id="GO:0044114">
    <property type="term" value="P:development of symbiont in host"/>
    <property type="evidence" value="ECO:0000315"/>
    <property type="project" value="CGD"/>
</dbReference>
<dbReference type="GO" id="GO:0007163">
    <property type="term" value="P:establishment or maintenance of cell polarity"/>
    <property type="evidence" value="ECO:0000315"/>
    <property type="project" value="CGD"/>
</dbReference>
<dbReference type="GO" id="GO:0030447">
    <property type="term" value="P:filamentous growth"/>
    <property type="evidence" value="ECO:0000315"/>
    <property type="project" value="CGD"/>
</dbReference>
<dbReference type="GO" id="GO:0036180">
    <property type="term" value="P:filamentous growth of a population of unicellular organisms in response to biotic stimulus"/>
    <property type="evidence" value="ECO:0000315"/>
    <property type="project" value="CGD"/>
</dbReference>
<dbReference type="GO" id="GO:0036170">
    <property type="term" value="P:filamentous growth of a population of unicellular organisms in response to starvation"/>
    <property type="evidence" value="ECO:0000315"/>
    <property type="project" value="CGD"/>
</dbReference>
<dbReference type="GO" id="GO:0044180">
    <property type="term" value="P:filamentous growth of a unicellular organism"/>
    <property type="evidence" value="ECO:0000315"/>
    <property type="project" value="CGD"/>
</dbReference>
<dbReference type="GO" id="GO:0035556">
    <property type="term" value="P:intracellular signal transduction"/>
    <property type="evidence" value="ECO:0000318"/>
    <property type="project" value="GO_Central"/>
</dbReference>
<dbReference type="GO" id="GO:1900445">
    <property type="term" value="P:positive regulation of filamentous growth of a population of unicellular organisms in response to biotic stimulus"/>
    <property type="evidence" value="ECO:0000315"/>
    <property type="project" value="CGD"/>
</dbReference>
<dbReference type="GO" id="GO:1900436">
    <property type="term" value="P:positive regulation of filamentous growth of a population of unicellular organisms in response to starvation"/>
    <property type="evidence" value="ECO:0000315"/>
    <property type="project" value="CGD"/>
</dbReference>
<dbReference type="GO" id="GO:0043408">
    <property type="term" value="P:regulation of MAPK cascade"/>
    <property type="evidence" value="ECO:0000318"/>
    <property type="project" value="GO_Central"/>
</dbReference>
<dbReference type="GO" id="GO:0044010">
    <property type="term" value="P:single-species biofilm formation"/>
    <property type="evidence" value="ECO:0000315"/>
    <property type="project" value="CGD"/>
</dbReference>
<dbReference type="CDD" id="cd01093">
    <property type="entry name" value="CRIB_PAK_like"/>
    <property type="match status" value="1"/>
</dbReference>
<dbReference type="CDD" id="cd13279">
    <property type="entry name" value="PH_Cla4_Ste20"/>
    <property type="match status" value="1"/>
</dbReference>
<dbReference type="CDD" id="cd06614">
    <property type="entry name" value="STKc_PAK"/>
    <property type="match status" value="1"/>
</dbReference>
<dbReference type="FunFam" id="1.10.510.10:FF:000139">
    <property type="entry name" value="Non-specific serine/threonine protein kinase"/>
    <property type="match status" value="1"/>
</dbReference>
<dbReference type="FunFam" id="3.30.200.20:FF:000761">
    <property type="entry name" value="Non-specific serine/threonine protein kinase"/>
    <property type="match status" value="1"/>
</dbReference>
<dbReference type="FunFam" id="3.90.810.10:FF:000005">
    <property type="entry name" value="Non-specific serine/threonine protein kinase"/>
    <property type="match status" value="1"/>
</dbReference>
<dbReference type="Gene3D" id="3.90.810.10">
    <property type="entry name" value="CRIB domain"/>
    <property type="match status" value="1"/>
</dbReference>
<dbReference type="Gene3D" id="3.30.200.20">
    <property type="entry name" value="Phosphorylase Kinase, domain 1"/>
    <property type="match status" value="1"/>
</dbReference>
<dbReference type="Gene3D" id="2.30.29.30">
    <property type="entry name" value="Pleckstrin-homology domain (PH domain)/Phosphotyrosine-binding domain (PTB)"/>
    <property type="match status" value="1"/>
</dbReference>
<dbReference type="Gene3D" id="1.10.510.10">
    <property type="entry name" value="Transferase(Phosphotransferase) domain 1"/>
    <property type="match status" value="1"/>
</dbReference>
<dbReference type="InterPro" id="IPR000095">
    <property type="entry name" value="CRIB_dom"/>
</dbReference>
<dbReference type="InterPro" id="IPR036936">
    <property type="entry name" value="CRIB_dom_sf"/>
</dbReference>
<dbReference type="InterPro" id="IPR011009">
    <property type="entry name" value="Kinase-like_dom_sf"/>
</dbReference>
<dbReference type="InterPro" id="IPR051931">
    <property type="entry name" value="PAK3-like"/>
</dbReference>
<dbReference type="InterPro" id="IPR033923">
    <property type="entry name" value="PAK_BD"/>
</dbReference>
<dbReference type="InterPro" id="IPR011993">
    <property type="entry name" value="PH-like_dom_sf"/>
</dbReference>
<dbReference type="InterPro" id="IPR001849">
    <property type="entry name" value="PH_domain"/>
</dbReference>
<dbReference type="InterPro" id="IPR000719">
    <property type="entry name" value="Prot_kinase_dom"/>
</dbReference>
<dbReference type="InterPro" id="IPR008271">
    <property type="entry name" value="Ser/Thr_kinase_AS"/>
</dbReference>
<dbReference type="PANTHER" id="PTHR45832">
    <property type="entry name" value="SERINE/THREONINE-PROTEIN KINASE SAMKA-RELATED-RELATED"/>
    <property type="match status" value="1"/>
</dbReference>
<dbReference type="PANTHER" id="PTHR45832:SF22">
    <property type="entry name" value="SERINE_THREONINE-PROTEIN KINASE SAMKA-RELATED"/>
    <property type="match status" value="1"/>
</dbReference>
<dbReference type="Pfam" id="PF00786">
    <property type="entry name" value="PBD"/>
    <property type="match status" value="1"/>
</dbReference>
<dbReference type="Pfam" id="PF00169">
    <property type="entry name" value="PH"/>
    <property type="match status" value="1"/>
</dbReference>
<dbReference type="Pfam" id="PF00069">
    <property type="entry name" value="Pkinase"/>
    <property type="match status" value="1"/>
</dbReference>
<dbReference type="SMART" id="SM00285">
    <property type="entry name" value="PBD"/>
    <property type="match status" value="1"/>
</dbReference>
<dbReference type="SMART" id="SM00233">
    <property type="entry name" value="PH"/>
    <property type="match status" value="1"/>
</dbReference>
<dbReference type="SMART" id="SM00220">
    <property type="entry name" value="S_TKc"/>
    <property type="match status" value="1"/>
</dbReference>
<dbReference type="SUPFAM" id="SSF50729">
    <property type="entry name" value="PH domain-like"/>
    <property type="match status" value="1"/>
</dbReference>
<dbReference type="SUPFAM" id="SSF56112">
    <property type="entry name" value="Protein kinase-like (PK-like)"/>
    <property type="match status" value="1"/>
</dbReference>
<dbReference type="PROSITE" id="PS50108">
    <property type="entry name" value="CRIB"/>
    <property type="match status" value="1"/>
</dbReference>
<dbReference type="PROSITE" id="PS50003">
    <property type="entry name" value="PH_DOMAIN"/>
    <property type="match status" value="1"/>
</dbReference>
<dbReference type="PROSITE" id="PS50011">
    <property type="entry name" value="PROTEIN_KINASE_DOM"/>
    <property type="match status" value="1"/>
</dbReference>
<dbReference type="PROSITE" id="PS00108">
    <property type="entry name" value="PROTEIN_KINASE_ST"/>
    <property type="match status" value="1"/>
</dbReference>
<reference key="1">
    <citation type="journal article" date="2004" name="Proc. Natl. Acad. Sci. U.S.A.">
        <title>The diploid genome sequence of Candida albicans.</title>
        <authorList>
            <person name="Jones T."/>
            <person name="Federspiel N.A."/>
            <person name="Chibana H."/>
            <person name="Dungan J."/>
            <person name="Kalman S."/>
            <person name="Magee B.B."/>
            <person name="Newport G."/>
            <person name="Thorstenson Y.R."/>
            <person name="Agabian N."/>
            <person name="Magee P.T."/>
            <person name="Davis R.W."/>
            <person name="Scherer S."/>
        </authorList>
    </citation>
    <scope>NUCLEOTIDE SEQUENCE [LARGE SCALE GENOMIC DNA]</scope>
    <source>
        <strain>SC5314 / ATCC MYA-2876</strain>
    </source>
</reference>
<reference key="2">
    <citation type="journal article" date="2007" name="Genome Biol.">
        <title>Assembly of the Candida albicans genome into sixteen supercontigs aligned on the eight chromosomes.</title>
        <authorList>
            <person name="van het Hoog M."/>
            <person name="Rast T.J."/>
            <person name="Martchenko M."/>
            <person name="Grindle S."/>
            <person name="Dignard D."/>
            <person name="Hogues H."/>
            <person name="Cuomo C."/>
            <person name="Berriman M."/>
            <person name="Scherer S."/>
            <person name="Magee B.B."/>
            <person name="Whiteway M."/>
            <person name="Chibana H."/>
            <person name="Nantel A."/>
            <person name="Magee P.T."/>
        </authorList>
    </citation>
    <scope>GENOME REANNOTATION</scope>
    <source>
        <strain>SC5314 / ATCC MYA-2876</strain>
    </source>
</reference>
<reference key="3">
    <citation type="journal article" date="2013" name="Genome Biol.">
        <title>Assembly of a phased diploid Candida albicans genome facilitates allele-specific measurements and provides a simple model for repeat and indel structure.</title>
        <authorList>
            <person name="Muzzey D."/>
            <person name="Schwartz K."/>
            <person name="Weissman J.S."/>
            <person name="Sherlock G."/>
        </authorList>
    </citation>
    <scope>NUCLEOTIDE SEQUENCE [LARGE SCALE GENOMIC DNA]</scope>
    <scope>GENOME REANNOTATION</scope>
    <source>
        <strain>SC5314 / ATCC MYA-2876</strain>
    </source>
</reference>
<reference key="4">
    <citation type="journal article" date="1997" name="Curr. Biol.">
        <title>Virulence and hyphal formation of Candida albicans require the Ste20p-like protein kinase CaCla4p.</title>
        <authorList>
            <person name="Leberer E."/>
            <person name="Ziegelbauer K."/>
            <person name="Schmidt A."/>
            <person name="Harcus D."/>
            <person name="Dignard D."/>
            <person name="Ash J."/>
            <person name="Johnson L."/>
            <person name="Thomas D.Y."/>
        </authorList>
    </citation>
    <scope>FUNCTION</scope>
    <scope>DISRUPTION PHENOTYPE</scope>
</reference>
<reference key="5">
    <citation type="journal article" date="2000" name="Infect. Immun.">
        <title>Role of hyphal formation in interactions of Candida albicans with endothelial cells.</title>
        <authorList>
            <person name="Phan Q.T."/>
            <person name="Belanger P.H."/>
            <person name="Filler S.G."/>
        </authorList>
    </citation>
    <scope>FUNCTION</scope>
    <scope>DISRUPTION PHENOTYPE</scope>
</reference>
<reference key="6">
    <citation type="journal article" date="2002" name="Eukaryot. Cell">
        <title>CDC42 is required for polarized growth in human pathogen Candida albicans.</title>
        <authorList>
            <person name="Ushinsky S.C."/>
            <person name="Harcus D."/>
            <person name="Ash J."/>
            <person name="Dignard D."/>
            <person name="Marcil A."/>
            <person name="Morchhauser J."/>
            <person name="Thomas D.Y."/>
            <person name="Whiteway M."/>
            <person name="Leberer E."/>
        </authorList>
    </citation>
    <scope>FUNCTION</scope>
</reference>
<reference key="7">
    <citation type="journal article" date="2002" name="FEMS Immunol. Med. Microbiol.">
        <title>Correlation between virulence of Candida albicans mutants in mice and Galleria mellonella larvae.</title>
        <authorList>
            <person name="Brennan M."/>
            <person name="Thomas D.Y."/>
            <person name="Whiteway M."/>
            <person name="Kavanagh K."/>
        </authorList>
    </citation>
    <scope>DISRUPTION PHENOTYPE</scope>
</reference>
<reference key="8">
    <citation type="journal article" date="2002" name="Infect. Immun.">
        <title>Candida albicans killing by RAW 264.7 mouse macrophage cells: effects of Candida genotype, infection ratios, and gamma interferon treatment.</title>
        <authorList>
            <person name="Marcil A."/>
            <person name="Harcus D."/>
            <person name="Thomas D.Y."/>
            <person name="Whiteway M."/>
        </authorList>
    </citation>
    <scope>DISRUPTION PHENOTYPE</scope>
</reference>
<reference key="9">
    <citation type="journal article" date="2005" name="Eukaryot. Cell">
        <title>Cell cycle dynamics and quorum sensing in Candida albicans chlamydospores are distinct from budding and hyphal growth.</title>
        <authorList>
            <person name="Martin S.W."/>
            <person name="Douglas L.M."/>
            <person name="Konopka J.B."/>
        </authorList>
    </citation>
    <scope>DISRUPTION PHENOTYPE</scope>
</reference>
<reference key="10">
    <citation type="journal article" date="2007" name="Chem. Biol.">
        <title>Inhibition of the pathogenically related morphologic transition in Candida albicans by disrupting Cdc42 binding to its effectors.</title>
        <authorList>
            <person name="Su Z."/>
            <person name="Li H."/>
            <person name="Li Y."/>
            <person name="Ni F."/>
        </authorList>
    </citation>
    <scope>FUNCTION</scope>
    <scope>DOMAIN</scope>
    <scope>INTERACTION WITH CDC42</scope>
</reference>
<comment type="function">
    <text evidence="6 9 11 12">Ser/Thr kinase required for wild-type filamentous growth, chlamydospore formation, and virulence in mouse systemic infection.</text>
</comment>
<comment type="catalytic activity">
    <reaction>
        <text>L-seryl-[protein] + ATP = O-phospho-L-seryl-[protein] + ADP + H(+)</text>
        <dbReference type="Rhea" id="RHEA:17989"/>
        <dbReference type="Rhea" id="RHEA-COMP:9863"/>
        <dbReference type="Rhea" id="RHEA-COMP:11604"/>
        <dbReference type="ChEBI" id="CHEBI:15378"/>
        <dbReference type="ChEBI" id="CHEBI:29999"/>
        <dbReference type="ChEBI" id="CHEBI:30616"/>
        <dbReference type="ChEBI" id="CHEBI:83421"/>
        <dbReference type="ChEBI" id="CHEBI:456216"/>
        <dbReference type="EC" id="2.7.11.1"/>
    </reaction>
</comment>
<comment type="catalytic activity">
    <reaction>
        <text>L-threonyl-[protein] + ATP = O-phospho-L-threonyl-[protein] + ADP + H(+)</text>
        <dbReference type="Rhea" id="RHEA:46608"/>
        <dbReference type="Rhea" id="RHEA-COMP:11060"/>
        <dbReference type="Rhea" id="RHEA-COMP:11605"/>
        <dbReference type="ChEBI" id="CHEBI:15378"/>
        <dbReference type="ChEBI" id="CHEBI:30013"/>
        <dbReference type="ChEBI" id="CHEBI:30616"/>
        <dbReference type="ChEBI" id="CHEBI:61977"/>
        <dbReference type="ChEBI" id="CHEBI:456216"/>
        <dbReference type="EC" id="2.7.11.1"/>
    </reaction>
</comment>
<comment type="subunit">
    <text evidence="11">Interacts (via the CRIB domain) with CDC42.</text>
</comment>
<comment type="domain">
    <text evidence="11">The CRIB domain is involved in the interaction with CDC42.</text>
</comment>
<comment type="disruption phenotype">
    <text evidence="6 7 8 10 12">Leads to defects in morphology and hyphal formation, impaired chlamydospore formation, reduced colonization of the kidneys in infected mice and suppressed virulence in the mouse model.</text>
</comment>
<comment type="similarity">
    <text evidence="13">Belongs to the protein kinase superfamily. STE Ser/Thr protein kinase family. STE20 subfamily.</text>
</comment>
<name>CLA4_CANAL</name>
<proteinExistence type="evidence at protein level"/>
<feature type="chain" id="PRO_0000424377" description="Serine/threonine-protein kinase CLA4">
    <location>
        <begin position="1"/>
        <end position="976"/>
    </location>
</feature>
<feature type="domain" description="PH" evidence="2">
    <location>
        <begin position="73"/>
        <end position="184"/>
    </location>
</feature>
<feature type="domain" description="CRIB" evidence="1">
    <location>
        <begin position="237"/>
        <end position="250"/>
    </location>
</feature>
<feature type="domain" description="Protein kinase" evidence="3">
    <location>
        <begin position="685"/>
        <end position="940"/>
    </location>
</feature>
<feature type="region of interest" description="Disordered" evidence="5">
    <location>
        <begin position="1"/>
        <end position="46"/>
    </location>
</feature>
<feature type="region of interest" description="Disordered" evidence="5">
    <location>
        <begin position="207"/>
        <end position="231"/>
    </location>
</feature>
<feature type="region of interest" description="Disordered" evidence="5">
    <location>
        <begin position="298"/>
        <end position="522"/>
    </location>
</feature>
<feature type="region of interest" description="Disordered" evidence="5">
    <location>
        <begin position="559"/>
        <end position="658"/>
    </location>
</feature>
<feature type="compositionally biased region" description="Gly residues" evidence="5">
    <location>
        <begin position="23"/>
        <end position="43"/>
    </location>
</feature>
<feature type="compositionally biased region" description="Low complexity" evidence="5">
    <location>
        <begin position="313"/>
        <end position="332"/>
    </location>
</feature>
<feature type="compositionally biased region" description="Low complexity" evidence="5">
    <location>
        <begin position="371"/>
        <end position="411"/>
    </location>
</feature>
<feature type="compositionally biased region" description="Polar residues" evidence="5">
    <location>
        <begin position="430"/>
        <end position="440"/>
    </location>
</feature>
<feature type="compositionally biased region" description="Basic and acidic residues" evidence="5">
    <location>
        <begin position="441"/>
        <end position="455"/>
    </location>
</feature>
<feature type="compositionally biased region" description="Low complexity" evidence="5">
    <location>
        <begin position="456"/>
        <end position="487"/>
    </location>
</feature>
<feature type="compositionally biased region" description="Pro residues" evidence="5">
    <location>
        <begin position="496"/>
        <end position="505"/>
    </location>
</feature>
<feature type="compositionally biased region" description="Low complexity" evidence="5">
    <location>
        <begin position="559"/>
        <end position="583"/>
    </location>
</feature>
<feature type="compositionally biased region" description="Polar residues" evidence="5">
    <location>
        <begin position="622"/>
        <end position="635"/>
    </location>
</feature>
<feature type="active site" description="Proton acceptor" evidence="3 4">
    <location>
        <position position="808"/>
    </location>
</feature>
<feature type="binding site" evidence="3">
    <location>
        <begin position="691"/>
        <end position="699"/>
    </location>
    <ligand>
        <name>ATP</name>
        <dbReference type="ChEBI" id="CHEBI:30616"/>
    </ligand>
</feature>
<feature type="binding site" evidence="3">
    <location>
        <position position="715"/>
    </location>
    <ligand>
        <name>ATP</name>
        <dbReference type="ChEBI" id="CHEBI:30616"/>
    </ligand>
</feature>
<keyword id="KW-0067">ATP-binding</keyword>
<keyword id="KW-0418">Kinase</keyword>
<keyword id="KW-0547">Nucleotide-binding</keyword>
<keyword id="KW-0597">Phosphoprotein</keyword>
<keyword id="KW-1185">Reference proteome</keyword>
<keyword id="KW-0723">Serine/threonine-protein kinase</keyword>
<keyword id="KW-0808">Transferase</keyword>
<keyword id="KW-0843">Virulence</keyword>
<gene>
    <name type="primary">CLA4</name>
    <name type="ordered locus">CAALFM_C110210CA</name>
    <name type="ORF">CaO19.12355</name>
    <name type="ORF">CaO19.4890</name>
</gene>
<accession>Q5APR8</accession>
<accession>A0A1D8PET2</accession>
<accession>Q5AP73</accession>
<organism>
    <name type="scientific">Candida albicans (strain SC5314 / ATCC MYA-2876)</name>
    <name type="common">Yeast</name>
    <dbReference type="NCBI Taxonomy" id="237561"/>
    <lineage>
        <taxon>Eukaryota</taxon>
        <taxon>Fungi</taxon>
        <taxon>Dikarya</taxon>
        <taxon>Ascomycota</taxon>
        <taxon>Saccharomycotina</taxon>
        <taxon>Pichiomycetes</taxon>
        <taxon>Debaryomycetaceae</taxon>
        <taxon>Candida/Lodderomyces clade</taxon>
        <taxon>Candida</taxon>
    </lineage>
</organism>
<evidence type="ECO:0000255" key="1">
    <source>
        <dbReference type="PROSITE-ProRule" id="PRU00057"/>
    </source>
</evidence>
<evidence type="ECO:0000255" key="2">
    <source>
        <dbReference type="PROSITE-ProRule" id="PRU00145"/>
    </source>
</evidence>
<evidence type="ECO:0000255" key="3">
    <source>
        <dbReference type="PROSITE-ProRule" id="PRU00159"/>
    </source>
</evidence>
<evidence type="ECO:0000255" key="4">
    <source>
        <dbReference type="PROSITE-ProRule" id="PRU10027"/>
    </source>
</evidence>
<evidence type="ECO:0000256" key="5">
    <source>
        <dbReference type="SAM" id="MobiDB-lite"/>
    </source>
</evidence>
<evidence type="ECO:0000269" key="6">
    <source>
    </source>
</evidence>
<evidence type="ECO:0000269" key="7">
    <source>
    </source>
</evidence>
<evidence type="ECO:0000269" key="8">
    <source>
    </source>
</evidence>
<evidence type="ECO:0000269" key="9">
    <source>
    </source>
</evidence>
<evidence type="ECO:0000269" key="10">
    <source>
    </source>
</evidence>
<evidence type="ECO:0000269" key="11">
    <source>
    </source>
</evidence>
<evidence type="ECO:0000269" key="12">
    <source>
    </source>
</evidence>
<evidence type="ECO:0000305" key="13"/>
<protein>
    <recommendedName>
        <fullName>Serine/threonine-protein kinase CLA4</fullName>
        <ecNumber>2.7.11.1</ecNumber>
    </recommendedName>
</protein>